<name>X_HBVC9</name>
<evidence type="ECO:0000255" key="1">
    <source>
        <dbReference type="HAMAP-Rule" id="MF_04074"/>
    </source>
</evidence>
<comment type="function">
    <text evidence="1">Multifunctional protein that plays a role in silencing host antiviral defenses and promoting viral transcription. Does not seem to be essential for HBV infection. May be directly involved in development of cirrhosis and liver cancer (hepatocellular carcinoma). Most of cytosolic activities involve modulation of cytosolic calcium. The effect on apoptosis is controversial depending on the cell types in which the studies have been conducted. May induce apoptosis by localizing in mitochondria and causing loss of mitochondrial membrane potential. May also modulate apoptosis by binding host CFLAR, a key regulator of the death-inducing signaling complex (DISC). Promotes viral transcription by using the host E3 ubiquitin ligase DDB1 to target the SMC5-SMC6 complex to proteasomal degradation. This host complex would otherwise bind to viral episomal DNA, and prevents its transcription. Moderately stimulates transcription of many different viral and cellular transcription elements. Promoters and enhancers stimulated by HBx contain DNA binding sites for NF-kappa-B, AP-1, AP-2, c-EBP, ATF/CREB, or the calcium-activated factor NF-AT.</text>
</comment>
<comment type="subunit">
    <text evidence="1">May form homodimer. May interact with host CEBPA, CFLAR, CREB1, DDB1, E4F1, HBXIP, HSPD1/HSP60, NFKBIA, POLR2E and SMAD4. Interacts with host SMC5-SMC6 complex and induces its degradation. Interacts with host TRPC4AP; leading to prevent ubiquitination of TRPC4AP. Interacts with host PLSCR1; this interaction promotes ubiquitination and degradation of HBx and impairs HBx-mediated cell proliferation.</text>
</comment>
<comment type="subcellular location">
    <subcellularLocation>
        <location evidence="1">Host cytoplasm</location>
    </subcellularLocation>
    <subcellularLocation>
        <location evidence="1">Host nucleus</location>
    </subcellularLocation>
    <subcellularLocation>
        <location evidence="1">Host mitochondrion</location>
    </subcellularLocation>
    <text evidence="1">Mainly cytoplasmic as only a fraction is detected in the nucleus. In cytoplasm, a minor fraction associates with mitochondria or proteasomes.</text>
</comment>
<comment type="PTM">
    <text evidence="1">A fraction may be phosphorylated in insect cells and HepG2 cells, a human hepatoblastoma cell line. Phosphorylated in vitro by host protein kinase C or mitogen-activated protein kinase. N-acetylated in insect cells.</text>
</comment>
<comment type="similarity">
    <text evidence="1">Belongs to the orthohepadnavirus protein X family.</text>
</comment>
<comment type="caution">
    <text>Transcriptional activities should be taken with a grain of salt. As of 2007, all studies demonstrating in vivo interaction between protein X and transcriptional components were performed with significant overexpression of both proteins and in the absence of viral infection.</text>
</comment>
<proteinExistence type="inferred from homology"/>
<keyword id="KW-1074">Activation of host NF-kappa-B by virus</keyword>
<keyword id="KW-0010">Activator</keyword>
<keyword id="KW-0053">Apoptosis</keyword>
<keyword id="KW-1035">Host cytoplasm</keyword>
<keyword id="KW-1079">Host G2/M cell cycle arrest by virus</keyword>
<keyword id="KW-1045">Host mitochondrion</keyword>
<keyword id="KW-1048">Host nucleus</keyword>
<keyword id="KW-0945">Host-virus interaction</keyword>
<keyword id="KW-1121">Modulation of host cell cycle by virus</keyword>
<keyword id="KW-0804">Transcription</keyword>
<keyword id="KW-0805">Transcription regulation</keyword>
<accession>P0C687</accession>
<sequence length="154" mass="16781">MAARLCCQLDPTRDVLCLRPVGAESRGRPVSGPLGDLPSPSASPVPTIDRAHLSLRGLPVCAFSSAGPCALRFTSARRMETTVNTHMILPKVLHKRTLGLPAMSTIDLEAYFKDCLFKDWEELGEEIRLKVFVLGGCRHKLVCSPAPCNFFTSA</sequence>
<feature type="chain" id="PRO_0000319909" description="Protein X">
    <location>
        <begin position="1"/>
        <end position="154"/>
    </location>
</feature>
<feature type="region of interest" description="Mitochondrial targeting sequence" evidence="1">
    <location>
        <begin position="68"/>
        <end position="117"/>
    </location>
</feature>
<protein>
    <recommendedName>
        <fullName evidence="1">Protein X</fullName>
    </recommendedName>
    <alternativeName>
        <fullName evidence="1">HBx</fullName>
    </alternativeName>
    <alternativeName>
        <fullName evidence="1">Peptide X</fullName>
    </alternativeName>
    <alternativeName>
        <fullName evidence="1">pX</fullName>
    </alternativeName>
</protein>
<reference key="1">
    <citation type="journal article" date="2001" name="J. Gen. Virol.">
        <title>A novel variant genotype C of hepatitis B virus identified in isolates from Australian Aborigines: complete genome sequence and phylogenetic relatedness.</title>
        <authorList>
            <person name="Sugauchi F."/>
            <person name="Mizokami M."/>
            <person name="Orito E."/>
            <person name="Ohno T."/>
            <person name="Kato H."/>
            <person name="Suzuki S."/>
            <person name="Kimura Y."/>
            <person name="Ueda R."/>
            <person name="Butterworth L.A."/>
            <person name="Cooksley W.G."/>
        </authorList>
    </citation>
    <scope>NUCLEOTIDE SEQUENCE [GENOMIC DNA]</scope>
</reference>
<reference key="2">
    <citation type="journal article" date="2004" name="J. Virol.">
        <title>The enigmatic X gene of hepatitis B virus.</title>
        <authorList>
            <person name="Bouchard M.J."/>
            <person name="Schneider R.J."/>
        </authorList>
    </citation>
    <scope>REVIEW</scope>
</reference>
<reference key="3">
    <citation type="journal article" date="2006" name="Cancer Sci.">
        <title>Molecular functions and biological roles of hepatitis B virus x protein.</title>
        <authorList>
            <person name="Tang H."/>
            <person name="Oishi N."/>
            <person name="Kaneko S."/>
            <person name="Murakami S."/>
        </authorList>
    </citation>
    <scope>REVIEW</scope>
</reference>
<gene>
    <name evidence="1" type="primary">X</name>
</gene>
<organism>
    <name type="scientific">Hepatitis B virus genotype C subtype ayw (isolate Australia/AustRC/1992)</name>
    <name type="common">HBV-C</name>
    <dbReference type="NCBI Taxonomy" id="489471"/>
    <lineage>
        <taxon>Viruses</taxon>
        <taxon>Riboviria</taxon>
        <taxon>Pararnavirae</taxon>
        <taxon>Artverviricota</taxon>
        <taxon>Revtraviricetes</taxon>
        <taxon>Blubervirales</taxon>
        <taxon>Hepadnaviridae</taxon>
        <taxon>Orthohepadnavirus</taxon>
        <taxon>Hepatitis B virus</taxon>
        <taxon>hepatitis B virus genotype C</taxon>
    </lineage>
</organism>
<dbReference type="EMBL" id="AB048704">
    <property type="status" value="NOT_ANNOTATED_CDS"/>
    <property type="molecule type" value="Genomic_DNA"/>
</dbReference>
<dbReference type="SMR" id="P0C687"/>
<dbReference type="Proteomes" id="UP000007927">
    <property type="component" value="Genome"/>
</dbReference>
<dbReference type="GO" id="GO:0033650">
    <property type="term" value="C:host cell mitochondrion"/>
    <property type="evidence" value="ECO:0007669"/>
    <property type="project" value="UniProtKB-SubCell"/>
</dbReference>
<dbReference type="GO" id="GO:0042025">
    <property type="term" value="C:host cell nucleus"/>
    <property type="evidence" value="ECO:0007669"/>
    <property type="project" value="UniProtKB-SubCell"/>
</dbReference>
<dbReference type="GO" id="GO:0006351">
    <property type="term" value="P:DNA-templated transcription"/>
    <property type="evidence" value="ECO:0007669"/>
    <property type="project" value="UniProtKB-UniRule"/>
</dbReference>
<dbReference type="GO" id="GO:0085033">
    <property type="term" value="P:symbiont-mediated activation of host NF-kappaB cascade"/>
    <property type="evidence" value="ECO:0007669"/>
    <property type="project" value="UniProtKB-UniRule"/>
</dbReference>
<dbReference type="GO" id="GO:0039592">
    <property type="term" value="P:symbiont-mediated arrest of host cell cycle during G2/M transition"/>
    <property type="evidence" value="ECO:0007669"/>
    <property type="project" value="UniProtKB-UniRule"/>
</dbReference>
<dbReference type="GO" id="GO:0019079">
    <property type="term" value="P:viral genome replication"/>
    <property type="evidence" value="ECO:0007669"/>
    <property type="project" value="UniProtKB-UniRule"/>
</dbReference>
<dbReference type="HAMAP" id="MF_04074">
    <property type="entry name" value="HBV_X"/>
    <property type="match status" value="1"/>
</dbReference>
<dbReference type="InterPro" id="IPR000236">
    <property type="entry name" value="Transactivation_prot_X"/>
</dbReference>
<dbReference type="Pfam" id="PF00739">
    <property type="entry name" value="X"/>
    <property type="match status" value="1"/>
</dbReference>
<organismHost>
    <name type="scientific">Homo sapiens</name>
    <name type="common">Human</name>
    <dbReference type="NCBI Taxonomy" id="9606"/>
</organismHost>
<organismHost>
    <name type="scientific">Pan troglodytes</name>
    <name type="common">Chimpanzee</name>
    <dbReference type="NCBI Taxonomy" id="9598"/>
</organismHost>